<gene>
    <name type="primary">ASH1</name>
    <name type="ordered locus">YKL185W</name>
</gene>
<name>ASH1_YEAST</name>
<keyword id="KW-0156">Chromatin regulator</keyword>
<keyword id="KW-0238">DNA-binding</keyword>
<keyword id="KW-0479">Metal-binding</keyword>
<keyword id="KW-0539">Nucleus</keyword>
<keyword id="KW-0597">Phosphoprotein</keyword>
<keyword id="KW-1185">Reference proteome</keyword>
<keyword id="KW-0678">Repressor</keyword>
<keyword id="KW-0804">Transcription</keyword>
<keyword id="KW-0805">Transcription regulation</keyword>
<keyword id="KW-0862">Zinc</keyword>
<keyword id="KW-0863">Zinc-finger</keyword>
<proteinExistence type="evidence at protein level"/>
<organism>
    <name type="scientific">Saccharomyces cerevisiae (strain ATCC 204508 / S288c)</name>
    <name type="common">Baker's yeast</name>
    <dbReference type="NCBI Taxonomy" id="559292"/>
    <lineage>
        <taxon>Eukaryota</taxon>
        <taxon>Fungi</taxon>
        <taxon>Dikarya</taxon>
        <taxon>Ascomycota</taxon>
        <taxon>Saccharomycotina</taxon>
        <taxon>Saccharomycetes</taxon>
        <taxon>Saccharomycetales</taxon>
        <taxon>Saccharomycetaceae</taxon>
        <taxon>Saccharomyces</taxon>
    </lineage>
</organism>
<protein>
    <recommendedName>
        <fullName>Transcriptional regulatory protein ASH1</fullName>
    </recommendedName>
    <alternativeName>
        <fullName>Daughter cells HO repressor protein</fullName>
    </alternativeName>
</protein>
<dbReference type="EMBL" id="X74151">
    <property type="protein sequence ID" value="CAA52253.1"/>
    <property type="molecule type" value="Genomic_DNA"/>
</dbReference>
<dbReference type="EMBL" id="Z28185">
    <property type="protein sequence ID" value="CAA82028.1"/>
    <property type="molecule type" value="Genomic_DNA"/>
</dbReference>
<dbReference type="EMBL" id="M88605">
    <property type="protein sequence ID" value="AAA34830.1"/>
    <property type="molecule type" value="Genomic_DNA"/>
</dbReference>
<dbReference type="EMBL" id="BK006944">
    <property type="protein sequence ID" value="DAA08981.1"/>
    <property type="molecule type" value="Genomic_DNA"/>
</dbReference>
<dbReference type="PIR" id="S34685">
    <property type="entry name" value="S34685"/>
</dbReference>
<dbReference type="RefSeq" id="NP_012736.1">
    <property type="nucleotide sequence ID" value="NM_001179751.1"/>
</dbReference>
<dbReference type="SMR" id="P34233"/>
<dbReference type="BioGRID" id="33937">
    <property type="interactions" value="170"/>
</dbReference>
<dbReference type="DIP" id="DIP-8053N"/>
<dbReference type="FunCoup" id="P34233">
    <property type="interactions" value="402"/>
</dbReference>
<dbReference type="IntAct" id="P34233">
    <property type="interactions" value="13"/>
</dbReference>
<dbReference type="MINT" id="P34233"/>
<dbReference type="STRING" id="4932.YKL185W"/>
<dbReference type="GlyGen" id="P34233">
    <property type="glycosylation" value="1 site"/>
</dbReference>
<dbReference type="iPTMnet" id="P34233"/>
<dbReference type="PaxDb" id="4932-YKL185W"/>
<dbReference type="PeptideAtlas" id="P34233"/>
<dbReference type="EnsemblFungi" id="YKL185W_mRNA">
    <property type="protein sequence ID" value="YKL185W"/>
    <property type="gene ID" value="YKL185W"/>
</dbReference>
<dbReference type="GeneID" id="853650"/>
<dbReference type="KEGG" id="sce:YKL185W"/>
<dbReference type="AGR" id="SGD:S000001668"/>
<dbReference type="SGD" id="S000001668">
    <property type="gene designation" value="ASH1"/>
</dbReference>
<dbReference type="VEuPathDB" id="FungiDB:YKL185W"/>
<dbReference type="eggNOG" id="ENOG502QX5C">
    <property type="taxonomic scope" value="Eukaryota"/>
</dbReference>
<dbReference type="HOGENOM" id="CLU_041192_0_0_1"/>
<dbReference type="InParanoid" id="P34233"/>
<dbReference type="OMA" id="SDSPCWR"/>
<dbReference type="OrthoDB" id="2162994at2759"/>
<dbReference type="BioCyc" id="YEAST:G3O-31948-MONOMER"/>
<dbReference type="BioGRID-ORCS" id="853650">
    <property type="hits" value="0 hits in 13 CRISPR screens"/>
</dbReference>
<dbReference type="PRO" id="PR:P34233"/>
<dbReference type="Proteomes" id="UP000002311">
    <property type="component" value="Chromosome XI"/>
</dbReference>
<dbReference type="RNAct" id="P34233">
    <property type="molecule type" value="protein"/>
</dbReference>
<dbReference type="GO" id="GO:0005933">
    <property type="term" value="C:cellular bud"/>
    <property type="evidence" value="ECO:0000314"/>
    <property type="project" value="SGD"/>
</dbReference>
<dbReference type="GO" id="GO:0005634">
    <property type="term" value="C:nucleus"/>
    <property type="evidence" value="ECO:0000314"/>
    <property type="project" value="SGD"/>
</dbReference>
<dbReference type="GO" id="GO:0033698">
    <property type="term" value="C:Rpd3L complex"/>
    <property type="evidence" value="ECO:0000314"/>
    <property type="project" value="SGD"/>
</dbReference>
<dbReference type="GO" id="GO:0070210">
    <property type="term" value="C:Rpd3L-Expanded complex"/>
    <property type="evidence" value="ECO:0007005"/>
    <property type="project" value="SGD"/>
</dbReference>
<dbReference type="GO" id="GO:0000987">
    <property type="term" value="F:cis-regulatory region sequence-specific DNA binding"/>
    <property type="evidence" value="ECO:0000314"/>
    <property type="project" value="SGD"/>
</dbReference>
<dbReference type="GO" id="GO:0001227">
    <property type="term" value="F:DNA-binding transcription repressor activity, RNA polymerase II-specific"/>
    <property type="evidence" value="ECO:0000314"/>
    <property type="project" value="SGD"/>
</dbReference>
<dbReference type="GO" id="GO:0008270">
    <property type="term" value="F:zinc ion binding"/>
    <property type="evidence" value="ECO:0007669"/>
    <property type="project" value="UniProtKB-KW"/>
</dbReference>
<dbReference type="GO" id="GO:0006325">
    <property type="term" value="P:chromatin organization"/>
    <property type="evidence" value="ECO:0007669"/>
    <property type="project" value="UniProtKB-KW"/>
</dbReference>
<dbReference type="GO" id="GO:0031495">
    <property type="term" value="P:negative regulation of mating type switching"/>
    <property type="evidence" value="ECO:0000315"/>
    <property type="project" value="SGD"/>
</dbReference>
<dbReference type="GO" id="GO:0000122">
    <property type="term" value="P:negative regulation of transcription by RNA polymerase II"/>
    <property type="evidence" value="ECO:0000315"/>
    <property type="project" value="SGD"/>
</dbReference>
<dbReference type="GO" id="GO:1900461">
    <property type="term" value="P:positive regulation of pseudohyphal growth by positive regulation of transcription from RNA polymerase II promoter"/>
    <property type="evidence" value="ECO:0000315"/>
    <property type="project" value="SGD"/>
</dbReference>
<dbReference type="CDD" id="cd00202">
    <property type="entry name" value="ZnF_GATA"/>
    <property type="match status" value="1"/>
</dbReference>
<dbReference type="DisProt" id="DP01579"/>
<dbReference type="Gene3D" id="3.30.50.10">
    <property type="entry name" value="Erythroid Transcription Factor GATA-1, subunit A"/>
    <property type="match status" value="1"/>
</dbReference>
<dbReference type="InterPro" id="IPR000679">
    <property type="entry name" value="Znf_GATA"/>
</dbReference>
<dbReference type="InterPro" id="IPR013088">
    <property type="entry name" value="Znf_NHR/GATA"/>
</dbReference>
<dbReference type="Pfam" id="PF00320">
    <property type="entry name" value="GATA"/>
    <property type="match status" value="1"/>
</dbReference>
<dbReference type="SMART" id="SM00401">
    <property type="entry name" value="ZnF_GATA"/>
    <property type="match status" value="1"/>
</dbReference>
<dbReference type="SUPFAM" id="SSF57716">
    <property type="entry name" value="Glucocorticoid receptor-like (DNA-binding domain)"/>
    <property type="match status" value="1"/>
</dbReference>
<dbReference type="PROSITE" id="PS00344">
    <property type="entry name" value="GATA_ZN_FINGER_1"/>
    <property type="match status" value="1"/>
</dbReference>
<dbReference type="PROSITE" id="PS50114">
    <property type="entry name" value="GATA_ZN_FINGER_2"/>
    <property type="match status" value="1"/>
</dbReference>
<feature type="chain" id="PRO_0000083492" description="Transcriptional regulatory protein ASH1">
    <location>
        <begin position="1"/>
        <end position="588"/>
    </location>
</feature>
<feature type="zinc finger region" description="GATA-type; atypical" evidence="1">
    <location>
        <begin position="499"/>
        <end position="526"/>
    </location>
</feature>
<feature type="region of interest" description="Disordered" evidence="2">
    <location>
        <begin position="85"/>
        <end position="109"/>
    </location>
</feature>
<feature type="region of interest" description="Disordered" evidence="2">
    <location>
        <begin position="377"/>
        <end position="398"/>
    </location>
</feature>
<feature type="region of interest" description="Disordered" evidence="2">
    <location>
        <begin position="417"/>
        <end position="495"/>
    </location>
</feature>
<feature type="compositionally biased region" description="Polar residues" evidence="2">
    <location>
        <begin position="99"/>
        <end position="109"/>
    </location>
</feature>
<feature type="compositionally biased region" description="Basic residues" evidence="2">
    <location>
        <begin position="383"/>
        <end position="392"/>
    </location>
</feature>
<feature type="compositionally biased region" description="Low complexity" evidence="2">
    <location>
        <begin position="417"/>
        <end position="433"/>
    </location>
</feature>
<feature type="compositionally biased region" description="Low complexity" evidence="2">
    <location>
        <begin position="470"/>
        <end position="493"/>
    </location>
</feature>
<feature type="modified residue" description="Phosphoserine" evidence="12">
    <location>
        <position position="56"/>
    </location>
</feature>
<feature type="modified residue" description="Phosphoserine" evidence="11 12">
    <location>
        <position position="465"/>
    </location>
</feature>
<comment type="function">
    <text evidence="3 7 8 9">Component of the RPD3C(L) histone deacetylase complex (HDAC). Responsible for the deacetylation of lysine residues on the N-terminal part of the core histones (H2A, H2B, H3 and H4). Histone deacetylation gives a tag for epigenetic repression and plays an important role in transcriptional regulation, cell cycle progression and developmental events. ASH1 is necessary to repress HO in daughter cells to block mating-type switching through its binding to HO promoter 5'-YTGAT-3' sites. Also involved in pseudohyphal growth.</text>
</comment>
<comment type="subunit">
    <text evidence="6">Component of the RPD3C(L) complex composed of at least ASH1, CTI6, DEP1, PHO23, RPD3, RXT2, RXT3, SAP30, SDS3, SIN3, UME1 and UME6.</text>
</comment>
<comment type="interaction">
    <interactant intactId="EBI-3027">
        <id>P34233</id>
    </interactant>
    <interactant intactId="EBI-5755">
        <id>P31385</id>
        <label>DEP1</label>
    </interactant>
    <organismsDiffer>false</organismsDiffer>
    <experiments>2</experiments>
</comment>
<comment type="subcellular location">
    <subcellularLocation>
        <location evidence="4 7 8 9 10">Nucleus</location>
    </subcellularLocation>
    <text>Preferentially accumulates in daughter cell nuclei at the end of anaphase.</text>
</comment>
<comment type="miscellaneous">
    <text>The ASH1 mRNA is transported to the daughter cell before cytokinesis where translation produces the protein to block mating-type switching. The ASH1 mRNA 3'-UTR and the mRNA localization machinery that are essential to restrict accumulation to the bud.</text>
</comment>
<comment type="miscellaneous">
    <text evidence="5">Present with 1800 molecules/cell in log phase SD medium.</text>
</comment>
<reference key="1">
    <citation type="journal article" date="1993" name="Yeast">
        <title>Sequencing and analysis of 51.6 kilobases on the left arm of chromosome XI from Saccharomyces cerevisiae reveals 23 open reading frames including the FAS1 gene.</title>
        <authorList>
            <person name="Wiemann S."/>
            <person name="Voss H."/>
            <person name="Schwager C."/>
            <person name="Rupp T."/>
            <person name="Stegemann J."/>
            <person name="Zimmermann J."/>
            <person name="Grothues D."/>
            <person name="Sensen C."/>
            <person name="Erfle H."/>
            <person name="Hewitt N."/>
            <person name="Banrevi A."/>
            <person name="Ansorge W."/>
        </authorList>
    </citation>
    <scope>NUCLEOTIDE SEQUENCE [GENOMIC DNA]</scope>
</reference>
<reference key="2">
    <citation type="journal article" date="1994" name="Nature">
        <title>Complete DNA sequence of yeast chromosome XI.</title>
        <authorList>
            <person name="Dujon B."/>
            <person name="Alexandraki D."/>
            <person name="Andre B."/>
            <person name="Ansorge W."/>
            <person name="Baladron V."/>
            <person name="Ballesta J.P.G."/>
            <person name="Banrevi A."/>
            <person name="Bolle P.-A."/>
            <person name="Bolotin-Fukuhara M."/>
            <person name="Bossier P."/>
            <person name="Bou G."/>
            <person name="Boyer J."/>
            <person name="Buitrago M.J."/>
            <person name="Cheret G."/>
            <person name="Colleaux L."/>
            <person name="Daignan-Fornier B."/>
            <person name="del Rey F."/>
            <person name="Dion C."/>
            <person name="Domdey H."/>
            <person name="Duesterhoeft A."/>
            <person name="Duesterhus S."/>
            <person name="Entian K.-D."/>
            <person name="Erfle H."/>
            <person name="Esteban P.F."/>
            <person name="Feldmann H."/>
            <person name="Fernandes L."/>
            <person name="Fobo G.M."/>
            <person name="Fritz C."/>
            <person name="Fukuhara H."/>
            <person name="Gabel C."/>
            <person name="Gaillon L."/>
            <person name="Garcia-Cantalejo J.M."/>
            <person name="Garcia-Ramirez J.J."/>
            <person name="Gent M.E."/>
            <person name="Ghazvini M."/>
            <person name="Goffeau A."/>
            <person name="Gonzalez A."/>
            <person name="Grothues D."/>
            <person name="Guerreiro P."/>
            <person name="Hegemann J.H."/>
            <person name="Hewitt N."/>
            <person name="Hilger F."/>
            <person name="Hollenberg C.P."/>
            <person name="Horaitis O."/>
            <person name="Indge K.J."/>
            <person name="Jacquier A."/>
            <person name="James C.M."/>
            <person name="Jauniaux J.-C."/>
            <person name="Jimenez A."/>
            <person name="Keuchel H."/>
            <person name="Kirchrath L."/>
            <person name="Kleine K."/>
            <person name="Koetter P."/>
            <person name="Legrain P."/>
            <person name="Liebl S."/>
            <person name="Louis E.J."/>
            <person name="Maia e Silva A."/>
            <person name="Marck C."/>
            <person name="Monnier A.-L."/>
            <person name="Moestl D."/>
            <person name="Mueller S."/>
            <person name="Obermaier B."/>
            <person name="Oliver S.G."/>
            <person name="Pallier C."/>
            <person name="Pascolo S."/>
            <person name="Pfeiffer F."/>
            <person name="Philippsen P."/>
            <person name="Planta R.J."/>
            <person name="Pohl F.M."/>
            <person name="Pohl T.M."/>
            <person name="Poehlmann R."/>
            <person name="Portetelle D."/>
            <person name="Purnelle B."/>
            <person name="Puzos V."/>
            <person name="Ramezani Rad M."/>
            <person name="Rasmussen S.W."/>
            <person name="Remacha M.A."/>
            <person name="Revuelta J.L."/>
            <person name="Richard G.-F."/>
            <person name="Rieger M."/>
            <person name="Rodrigues-Pousada C."/>
            <person name="Rose M."/>
            <person name="Rupp T."/>
            <person name="Santos M.A."/>
            <person name="Schwager C."/>
            <person name="Sensen C."/>
            <person name="Skala J."/>
            <person name="Soares H."/>
            <person name="Sor F."/>
            <person name="Stegemann J."/>
            <person name="Tettelin H."/>
            <person name="Thierry A."/>
            <person name="Tzermia M."/>
            <person name="Urrestarazu L.A."/>
            <person name="van Dyck L."/>
            <person name="van Vliet-Reedijk J.C."/>
            <person name="Valens M."/>
            <person name="Vandenbol M."/>
            <person name="Vilela C."/>
            <person name="Vissers S."/>
            <person name="von Wettstein D."/>
            <person name="Voss H."/>
            <person name="Wiemann S."/>
            <person name="Xu G."/>
            <person name="Zimmermann J."/>
            <person name="Haasemann M."/>
            <person name="Becker I."/>
            <person name="Mewes H.-W."/>
        </authorList>
    </citation>
    <scope>NUCLEOTIDE SEQUENCE [LARGE SCALE GENOMIC DNA]</scope>
    <source>
        <strain>ATCC 204508 / S288c</strain>
    </source>
</reference>
<reference key="3">
    <citation type="journal article" date="2014" name="G3 (Bethesda)">
        <title>The reference genome sequence of Saccharomyces cerevisiae: Then and now.</title>
        <authorList>
            <person name="Engel S.R."/>
            <person name="Dietrich F.S."/>
            <person name="Fisk D.G."/>
            <person name="Binkley G."/>
            <person name="Balakrishnan R."/>
            <person name="Costanzo M.C."/>
            <person name="Dwight S.S."/>
            <person name="Hitz B.C."/>
            <person name="Karra K."/>
            <person name="Nash R.S."/>
            <person name="Weng S."/>
            <person name="Wong E.D."/>
            <person name="Lloyd P."/>
            <person name="Skrzypek M.S."/>
            <person name="Miyasato S.R."/>
            <person name="Simison M."/>
            <person name="Cherry J.M."/>
        </authorList>
    </citation>
    <scope>GENOME REANNOTATION</scope>
    <source>
        <strain>ATCC 204508 / S288c</strain>
    </source>
</reference>
<reference key="4">
    <citation type="submission" date="1992-06" db="EMBL/GenBank/DDBJ databases">
        <authorList>
            <person name="Cusick M.E."/>
        </authorList>
    </citation>
    <scope>NUCLEOTIDE SEQUENCE [GENOMIC DNA] OF 110-563</scope>
</reference>
<reference key="5">
    <citation type="journal article" date="1996" name="Cell">
        <title>Asymmetric accumulation of Ash1p in postanaphase nuclei depends on a myosin and restricts yeast mating-type switching to mother cells.</title>
        <authorList>
            <person name="Bobola N."/>
            <person name="Jansen R.-P."/>
            <person name="Shin T.H."/>
            <person name="Nasmyth K."/>
        </authorList>
    </citation>
    <scope>FUNCTION</scope>
    <scope>SUBCELLULAR LOCATION</scope>
</reference>
<reference key="6">
    <citation type="journal article" date="1996" name="Cell">
        <title>Identification of asymmetrically localized determinant, Ash1p, required for lineage-specific transcription of the yeast HO gene.</title>
        <authorList>
            <person name="Sil A."/>
            <person name="Herskowitz I."/>
        </authorList>
    </citation>
    <scope>FUNCTION</scope>
    <scope>SUBCELLULAR LOCATION</scope>
</reference>
<reference key="7">
    <citation type="journal article" date="1997" name="Nature">
        <title>Actin-dependent localization of an RNA encoding a cell-fate determinant in yeast.</title>
        <authorList>
            <person name="Takizawa P.A."/>
            <person name="Sil A."/>
            <person name="Swedlow J.R."/>
            <person name="Herskowitz I."/>
            <person name="Vale R.D."/>
        </authorList>
    </citation>
    <scope>TRANSPORT AND ASYMMETRIC LOCATION OF MRNA</scope>
</reference>
<reference key="8">
    <citation type="journal article" date="1997" name="Science">
        <title>Mating type switching in yeast controlled by asymmetric localization of ASH1 mRNA.</title>
        <authorList>
            <person name="Long R.M."/>
            <person name="Singer R.H."/>
            <person name="Meng X."/>
            <person name="Gonzalez I."/>
            <person name="Nasmyth K."/>
            <person name="Jansen R.-P."/>
        </authorList>
    </citation>
    <scope>TRANSPORT AND ASYMMETRIC LOCATION OF MRNA</scope>
</reference>
<reference key="9">
    <citation type="journal article" date="1998" name="Mol. Cell">
        <title>Localization of ASH1 mRNA particles in living yeast.</title>
        <authorList>
            <person name="Bertrand E."/>
            <person name="Chartrand P."/>
            <person name="Schaefer M."/>
            <person name="Shenoy S.M."/>
            <person name="Singer R.H."/>
            <person name="Long R.M."/>
        </authorList>
    </citation>
    <scope>SUBCELLULAR LOCATION</scope>
    <scope>MRNA TRANSPORT</scope>
</reference>
<reference key="10">
    <citation type="journal article" date="1998" name="Mol. Cell. Biol.">
        <title>Ash1, a daughter cell-specific protein, is required for pseudohyphal growth of Saccharomyces cerevisiae.</title>
        <authorList>
            <person name="Chandarlapaty S."/>
            <person name="Errede B."/>
        </authorList>
    </citation>
    <scope>FUNCTION</scope>
    <scope>SUBCELLULAR LOCATION</scope>
</reference>
<reference key="11">
    <citation type="journal article" date="2001" name="Proc. Natl. Acad. Sci. U.S.A.">
        <title>Ash1p is a site-specific DNA-binding protein that actively represses transcription.</title>
        <authorList>
            <person name="Maxon M.E."/>
            <person name="Herskowitz I."/>
        </authorList>
    </citation>
    <scope>FUNCTION</scope>
    <scope>DOMAIN</scope>
    <scope>DNA-BINDING</scope>
</reference>
<reference key="12">
    <citation type="journal article" date="2003" name="Nature">
        <title>Global analysis of protein localization in budding yeast.</title>
        <authorList>
            <person name="Huh W.-K."/>
            <person name="Falvo J.V."/>
            <person name="Gerke L.C."/>
            <person name="Carroll A.S."/>
            <person name="Howson R.W."/>
            <person name="Weissman J.S."/>
            <person name="O'Shea E.K."/>
        </authorList>
    </citation>
    <scope>SUBCELLULAR LOCATION [LARGE SCALE ANALYSIS]</scope>
</reference>
<reference key="13">
    <citation type="journal article" date="2003" name="Nature">
        <title>Global analysis of protein expression in yeast.</title>
        <authorList>
            <person name="Ghaemmaghami S."/>
            <person name="Huh W.-K."/>
            <person name="Bower K."/>
            <person name="Howson R.W."/>
            <person name="Belle A."/>
            <person name="Dephoure N."/>
            <person name="O'Shea E.K."/>
            <person name="Weissman J.S."/>
        </authorList>
    </citation>
    <scope>LEVEL OF PROTEIN EXPRESSION [LARGE SCALE ANALYSIS]</scope>
</reference>
<reference key="14">
    <citation type="journal article" date="2005" name="Biochim. Biophys. Acta">
        <title>Stable incorporation of sequence specific repressors Ash1 and Ume6 into the Rpd3L complex.</title>
        <authorList>
            <person name="Carrozza M.J."/>
            <person name="Florens L."/>
            <person name="Swanson S.K."/>
            <person name="Shia W.-J."/>
            <person name="Anderson S."/>
            <person name="Yates J."/>
            <person name="Washburn M.P."/>
            <person name="Workman J.L."/>
        </authorList>
    </citation>
    <scope>IDENTIFICATION IN THE RPD3C(L) COMPLEX</scope>
    <scope>IDENTIFICATION BY MASS SPECTROMETRY</scope>
</reference>
<reference key="15">
    <citation type="journal article" date="2008" name="Mol. Cell. Proteomics">
        <title>A multidimensional chromatography technology for in-depth phosphoproteome analysis.</title>
        <authorList>
            <person name="Albuquerque C.P."/>
            <person name="Smolka M.B."/>
            <person name="Payne S.H."/>
            <person name="Bafna V."/>
            <person name="Eng J."/>
            <person name="Zhou H."/>
        </authorList>
    </citation>
    <scope>PHOSPHORYLATION [LARGE SCALE ANALYSIS] AT SER-465</scope>
    <scope>IDENTIFICATION BY MASS SPECTROMETRY [LARGE SCALE ANALYSIS]</scope>
</reference>
<reference key="16">
    <citation type="journal article" date="2009" name="Science">
        <title>Global analysis of Cdk1 substrate phosphorylation sites provides insights into evolution.</title>
        <authorList>
            <person name="Holt L.J."/>
            <person name="Tuch B.B."/>
            <person name="Villen J."/>
            <person name="Johnson A.D."/>
            <person name="Gygi S.P."/>
            <person name="Morgan D.O."/>
        </authorList>
    </citation>
    <scope>PHOSPHORYLATION [LARGE SCALE ANALYSIS] AT SER-56 AND SER-465</scope>
    <scope>IDENTIFICATION BY MASS SPECTROMETRY [LARGE SCALE ANALYSIS]</scope>
</reference>
<evidence type="ECO:0000255" key="1">
    <source>
        <dbReference type="PROSITE-ProRule" id="PRU00094"/>
    </source>
</evidence>
<evidence type="ECO:0000256" key="2">
    <source>
        <dbReference type="SAM" id="MobiDB-lite"/>
    </source>
</evidence>
<evidence type="ECO:0000269" key="3">
    <source>
    </source>
</evidence>
<evidence type="ECO:0000269" key="4">
    <source>
    </source>
</evidence>
<evidence type="ECO:0000269" key="5">
    <source>
    </source>
</evidence>
<evidence type="ECO:0000269" key="6">
    <source>
    </source>
</evidence>
<evidence type="ECO:0000269" key="7">
    <source>
    </source>
</evidence>
<evidence type="ECO:0000269" key="8">
    <source>
    </source>
</evidence>
<evidence type="ECO:0000269" key="9">
    <source>
    </source>
</evidence>
<evidence type="ECO:0000269" key="10">
    <source>
    </source>
</evidence>
<evidence type="ECO:0007744" key="11">
    <source>
    </source>
</evidence>
<evidence type="ECO:0007744" key="12">
    <source>
    </source>
</evidence>
<accession>P34233</accession>
<accession>D6VX15</accession>
<sequence>MSSLYIKTPLHALSAGPDSHANSSYYDNLLLPSFSNLSSNISRNNITTDNNINSASPRKYSFHSLNVSPILSPISLANEILGKKSNTAPASPHHMDYNPISSLTPGNSPEFNKASLSQISFTNPLNYGSGLGFSSNSQPRLPLLDRLSSVSLSKRPERPQQSLPSLRHLQLLPSPLLQENAARFPDTSKRTSNWKTDLTHWCKDTNYQDYVKIREEVAHFKPLSIPNLTNNQNNDSFNYGKELESTRSSKFHSPSKESFDRTKLIPSILEAKDQFKDLSNNAWSITPPVTPPMSPPTNRTMERTTLRGVEASFFEGKSSNNDSIFNPIISEKLVQEVKHQRQLRGNSFPMPNASHKKTNSFKALQIKKLLANRDILSNNSKSNVRKPSKNKISKQASNVFGNTARQLVMKLDNASYSSVSASSSPSPSTPTKSGKMRSRSSSPVRPKAYTPSPRSPNYHRFALDSPPQSPRRSSNSSITKKGSRRSSGSSPTRHTTRVCVSCHSSDSPCWRPSWSPRKQDQLCNSCGLRYKKTHTRCLNDLCRKIPTKGEINIMKSNGIDKEFVPERNCEIEGYRCLFCNYITETVEN</sequence>